<evidence type="ECO:0000255" key="1">
    <source>
        <dbReference type="HAMAP-Rule" id="MF_01346"/>
    </source>
</evidence>
<reference key="1">
    <citation type="submission" date="2009-01" db="EMBL/GenBank/DDBJ databases">
        <title>Complete sequence of Diaphorobacter sp. TPSY.</title>
        <authorList>
            <consortium name="US DOE Joint Genome Institute"/>
            <person name="Lucas S."/>
            <person name="Copeland A."/>
            <person name="Lapidus A."/>
            <person name="Glavina del Rio T."/>
            <person name="Tice H."/>
            <person name="Bruce D."/>
            <person name="Goodwin L."/>
            <person name="Pitluck S."/>
            <person name="Chertkov O."/>
            <person name="Brettin T."/>
            <person name="Detter J.C."/>
            <person name="Han C."/>
            <person name="Larimer F."/>
            <person name="Land M."/>
            <person name="Hauser L."/>
            <person name="Kyrpides N."/>
            <person name="Mikhailova N."/>
            <person name="Coates J.D."/>
        </authorList>
    </citation>
    <scope>NUCLEOTIDE SEQUENCE [LARGE SCALE GENOMIC DNA]</scope>
    <source>
        <strain>TPSY</strain>
    </source>
</reference>
<name>ATPA_ACIET</name>
<sequence>MQLNPAEISELIKSRIEGLAASSDIRNQGTVVSVTDGIVRVHGLSDVMQGEMLEFPAAADGQPSFGLALNLERDSVGAVILGEYEHISEGDTVKCTGRILEVPVGPELIGRVVNALGQPIDGKGPINAKMTDVIEKVAPGVIARQSVDQPLQTGLKSIDSMVPIGRGQRELIIGDRQTGKTAVAIDAIINQKGQGVTCIYVAIGQKASSIKNVVRALEQAGAMEYTIVVAASASESAAMQYVSAYSGCTMGEYFRDRGEDALIVYDDLSKQAVAYRQVSLLLRRPPGREAFPGDVFYLHSRLLERAARVNADYVEAFTKGEVKGKTGSLTALPVIETQAGDVSAFVPTNVISITDGQIFLETSLFNAGIRPAINAGISVSRVGGAAQTKLIKGLSGGIRTDLAQYRELAAFAQFASDLDEATRKQLDRGARVTELLKQPQYSPLSTALMGATLFTVNKGFLDDVDVKKVLAFEAGLHQYLKTSHGALLDRLQQNRAFDKEGKDEAELTQAITAFKKSFV</sequence>
<organism>
    <name type="scientific">Acidovorax ebreus (strain TPSY)</name>
    <name type="common">Diaphorobacter sp. (strain TPSY)</name>
    <dbReference type="NCBI Taxonomy" id="535289"/>
    <lineage>
        <taxon>Bacteria</taxon>
        <taxon>Pseudomonadati</taxon>
        <taxon>Pseudomonadota</taxon>
        <taxon>Betaproteobacteria</taxon>
        <taxon>Burkholderiales</taxon>
        <taxon>Comamonadaceae</taxon>
        <taxon>Diaphorobacter</taxon>
    </lineage>
</organism>
<accession>B9MBA1</accession>
<proteinExistence type="inferred from homology"/>
<gene>
    <name evidence="1" type="primary">atpA</name>
    <name type="ordered locus">Dtpsy_0301</name>
</gene>
<comment type="function">
    <text evidence="1">Produces ATP from ADP in the presence of a proton gradient across the membrane. The alpha chain is a regulatory subunit.</text>
</comment>
<comment type="catalytic activity">
    <reaction evidence="1">
        <text>ATP + H2O + 4 H(+)(in) = ADP + phosphate + 5 H(+)(out)</text>
        <dbReference type="Rhea" id="RHEA:57720"/>
        <dbReference type="ChEBI" id="CHEBI:15377"/>
        <dbReference type="ChEBI" id="CHEBI:15378"/>
        <dbReference type="ChEBI" id="CHEBI:30616"/>
        <dbReference type="ChEBI" id="CHEBI:43474"/>
        <dbReference type="ChEBI" id="CHEBI:456216"/>
        <dbReference type="EC" id="7.1.2.2"/>
    </reaction>
</comment>
<comment type="subunit">
    <text evidence="1">F-type ATPases have 2 components, CF(1) - the catalytic core - and CF(0) - the membrane proton channel. CF(1) has five subunits: alpha(3), beta(3), gamma(1), delta(1), epsilon(1). CF(0) has three main subunits: a(1), b(2) and c(9-12). The alpha and beta chains form an alternating ring which encloses part of the gamma chain. CF(1) is attached to CF(0) by a central stalk formed by the gamma and epsilon chains, while a peripheral stalk is formed by the delta and b chains.</text>
</comment>
<comment type="subcellular location">
    <subcellularLocation>
        <location evidence="1">Cell inner membrane</location>
        <topology evidence="1">Peripheral membrane protein</topology>
    </subcellularLocation>
</comment>
<comment type="similarity">
    <text evidence="1">Belongs to the ATPase alpha/beta chains family.</text>
</comment>
<protein>
    <recommendedName>
        <fullName evidence="1">ATP synthase subunit alpha</fullName>
        <ecNumber evidence="1">7.1.2.2</ecNumber>
    </recommendedName>
    <alternativeName>
        <fullName evidence="1">ATP synthase F1 sector subunit alpha</fullName>
    </alternativeName>
    <alternativeName>
        <fullName evidence="1">F-ATPase subunit alpha</fullName>
    </alternativeName>
</protein>
<dbReference type="EC" id="7.1.2.2" evidence="1"/>
<dbReference type="EMBL" id="CP001392">
    <property type="protein sequence ID" value="ACM31785.1"/>
    <property type="molecule type" value="Genomic_DNA"/>
</dbReference>
<dbReference type="RefSeq" id="WP_011803770.1">
    <property type="nucleotide sequence ID" value="NC_011992.1"/>
</dbReference>
<dbReference type="SMR" id="B9MBA1"/>
<dbReference type="GeneID" id="84683184"/>
<dbReference type="KEGG" id="dia:Dtpsy_0301"/>
<dbReference type="eggNOG" id="COG0056">
    <property type="taxonomic scope" value="Bacteria"/>
</dbReference>
<dbReference type="HOGENOM" id="CLU_010091_2_1_4"/>
<dbReference type="Proteomes" id="UP000000450">
    <property type="component" value="Chromosome"/>
</dbReference>
<dbReference type="GO" id="GO:0005886">
    <property type="term" value="C:plasma membrane"/>
    <property type="evidence" value="ECO:0007669"/>
    <property type="project" value="UniProtKB-SubCell"/>
</dbReference>
<dbReference type="GO" id="GO:0045259">
    <property type="term" value="C:proton-transporting ATP synthase complex"/>
    <property type="evidence" value="ECO:0007669"/>
    <property type="project" value="UniProtKB-KW"/>
</dbReference>
<dbReference type="GO" id="GO:0043531">
    <property type="term" value="F:ADP binding"/>
    <property type="evidence" value="ECO:0007669"/>
    <property type="project" value="TreeGrafter"/>
</dbReference>
<dbReference type="GO" id="GO:0005524">
    <property type="term" value="F:ATP binding"/>
    <property type="evidence" value="ECO:0007669"/>
    <property type="project" value="UniProtKB-UniRule"/>
</dbReference>
<dbReference type="GO" id="GO:0046933">
    <property type="term" value="F:proton-transporting ATP synthase activity, rotational mechanism"/>
    <property type="evidence" value="ECO:0007669"/>
    <property type="project" value="UniProtKB-UniRule"/>
</dbReference>
<dbReference type="CDD" id="cd18113">
    <property type="entry name" value="ATP-synt_F1_alpha_C"/>
    <property type="match status" value="1"/>
</dbReference>
<dbReference type="CDD" id="cd18116">
    <property type="entry name" value="ATP-synt_F1_alpha_N"/>
    <property type="match status" value="1"/>
</dbReference>
<dbReference type="CDD" id="cd01132">
    <property type="entry name" value="F1-ATPase_alpha_CD"/>
    <property type="match status" value="1"/>
</dbReference>
<dbReference type="FunFam" id="1.20.150.20:FF:000001">
    <property type="entry name" value="ATP synthase subunit alpha"/>
    <property type="match status" value="1"/>
</dbReference>
<dbReference type="FunFam" id="2.40.30.20:FF:000001">
    <property type="entry name" value="ATP synthase subunit alpha"/>
    <property type="match status" value="1"/>
</dbReference>
<dbReference type="FunFam" id="3.40.50.300:FF:000002">
    <property type="entry name" value="ATP synthase subunit alpha"/>
    <property type="match status" value="1"/>
</dbReference>
<dbReference type="Gene3D" id="2.40.30.20">
    <property type="match status" value="1"/>
</dbReference>
<dbReference type="Gene3D" id="1.20.150.20">
    <property type="entry name" value="ATP synthase alpha/beta chain, C-terminal domain"/>
    <property type="match status" value="1"/>
</dbReference>
<dbReference type="Gene3D" id="3.40.50.300">
    <property type="entry name" value="P-loop containing nucleotide triphosphate hydrolases"/>
    <property type="match status" value="1"/>
</dbReference>
<dbReference type="HAMAP" id="MF_01346">
    <property type="entry name" value="ATP_synth_alpha_bact"/>
    <property type="match status" value="1"/>
</dbReference>
<dbReference type="InterPro" id="IPR023366">
    <property type="entry name" value="ATP_synth_asu-like_sf"/>
</dbReference>
<dbReference type="InterPro" id="IPR000793">
    <property type="entry name" value="ATP_synth_asu_C"/>
</dbReference>
<dbReference type="InterPro" id="IPR038376">
    <property type="entry name" value="ATP_synth_asu_C_sf"/>
</dbReference>
<dbReference type="InterPro" id="IPR033732">
    <property type="entry name" value="ATP_synth_F1_a_nt-bd_dom"/>
</dbReference>
<dbReference type="InterPro" id="IPR005294">
    <property type="entry name" value="ATP_synth_F1_asu"/>
</dbReference>
<dbReference type="InterPro" id="IPR020003">
    <property type="entry name" value="ATPase_a/bsu_AS"/>
</dbReference>
<dbReference type="InterPro" id="IPR004100">
    <property type="entry name" value="ATPase_F1/V1/A1_a/bsu_N"/>
</dbReference>
<dbReference type="InterPro" id="IPR036121">
    <property type="entry name" value="ATPase_F1/V1/A1_a/bsu_N_sf"/>
</dbReference>
<dbReference type="InterPro" id="IPR000194">
    <property type="entry name" value="ATPase_F1/V1/A1_a/bsu_nucl-bd"/>
</dbReference>
<dbReference type="InterPro" id="IPR027417">
    <property type="entry name" value="P-loop_NTPase"/>
</dbReference>
<dbReference type="NCBIfam" id="TIGR00962">
    <property type="entry name" value="atpA"/>
    <property type="match status" value="1"/>
</dbReference>
<dbReference type="NCBIfam" id="NF009884">
    <property type="entry name" value="PRK13343.1"/>
    <property type="match status" value="1"/>
</dbReference>
<dbReference type="PANTHER" id="PTHR48082">
    <property type="entry name" value="ATP SYNTHASE SUBUNIT ALPHA, MITOCHONDRIAL"/>
    <property type="match status" value="1"/>
</dbReference>
<dbReference type="PANTHER" id="PTHR48082:SF2">
    <property type="entry name" value="ATP SYNTHASE SUBUNIT ALPHA, MITOCHONDRIAL"/>
    <property type="match status" value="1"/>
</dbReference>
<dbReference type="Pfam" id="PF00006">
    <property type="entry name" value="ATP-synt_ab"/>
    <property type="match status" value="1"/>
</dbReference>
<dbReference type="Pfam" id="PF00306">
    <property type="entry name" value="ATP-synt_ab_C"/>
    <property type="match status" value="1"/>
</dbReference>
<dbReference type="Pfam" id="PF02874">
    <property type="entry name" value="ATP-synt_ab_N"/>
    <property type="match status" value="1"/>
</dbReference>
<dbReference type="PIRSF" id="PIRSF039088">
    <property type="entry name" value="F_ATPase_subunit_alpha"/>
    <property type="match status" value="1"/>
</dbReference>
<dbReference type="SUPFAM" id="SSF47917">
    <property type="entry name" value="C-terminal domain of alpha and beta subunits of F1 ATP synthase"/>
    <property type="match status" value="1"/>
</dbReference>
<dbReference type="SUPFAM" id="SSF50615">
    <property type="entry name" value="N-terminal domain of alpha and beta subunits of F1 ATP synthase"/>
    <property type="match status" value="1"/>
</dbReference>
<dbReference type="SUPFAM" id="SSF52540">
    <property type="entry name" value="P-loop containing nucleoside triphosphate hydrolases"/>
    <property type="match status" value="1"/>
</dbReference>
<dbReference type="PROSITE" id="PS00152">
    <property type="entry name" value="ATPASE_ALPHA_BETA"/>
    <property type="match status" value="1"/>
</dbReference>
<feature type="chain" id="PRO_1000166536" description="ATP synthase subunit alpha">
    <location>
        <begin position="1"/>
        <end position="519"/>
    </location>
</feature>
<feature type="binding site" evidence="1">
    <location>
        <begin position="174"/>
        <end position="181"/>
    </location>
    <ligand>
        <name>ATP</name>
        <dbReference type="ChEBI" id="CHEBI:30616"/>
    </ligand>
</feature>
<feature type="site" description="Required for activity" evidence="1">
    <location>
        <position position="378"/>
    </location>
</feature>
<keyword id="KW-0066">ATP synthesis</keyword>
<keyword id="KW-0067">ATP-binding</keyword>
<keyword id="KW-0997">Cell inner membrane</keyword>
<keyword id="KW-1003">Cell membrane</keyword>
<keyword id="KW-0139">CF(1)</keyword>
<keyword id="KW-0375">Hydrogen ion transport</keyword>
<keyword id="KW-0406">Ion transport</keyword>
<keyword id="KW-0472">Membrane</keyword>
<keyword id="KW-0547">Nucleotide-binding</keyword>
<keyword id="KW-1185">Reference proteome</keyword>
<keyword id="KW-1278">Translocase</keyword>
<keyword id="KW-0813">Transport</keyword>